<protein>
    <recommendedName>
        <fullName evidence="1">Glutamate-1-semialdehyde 2,1-aminomutase</fullName>
        <shortName evidence="1">GSA</shortName>
        <ecNumber evidence="1">5.4.3.8</ecNumber>
    </recommendedName>
    <alternativeName>
        <fullName evidence="1">Glutamate-1-semialdehyde aminotransferase</fullName>
        <shortName evidence="1">GSA-AT</shortName>
    </alternativeName>
</protein>
<sequence length="426" mass="45314">MSKSENLYSAARELIPGGVNSPVRAFTGVGGTPLFIEKADGAYLYDVDGKAYIDYVGSWGPMVLGHNHPAIRNAVIEAAERGLSFGAPTEMEVKMAELVTNLVPTMDMVRMVNSGTEATMSAIRLARGFTGRDKIIKFEGCYHGHADCLLVKAGSGALTLGQPNSPGVPADFAKHTLTCTYNDLTSVRAAFEQYPQEIACIIVEPVAGNMNCVPPLPEFLPGLRALCDEFGALLIIDEVMTGFRVALAGAQDYYGVVPDLTCLGKIIGGGMPVGAFGGRRDVMDALAPTGPVYQAGTLSGNPIAMAAGFACLNEVAQPGIHETLDELTTRLAEGLCEAAQEAGIPLVVNHVGGMFGIFFTDAESVTCYQDVMACDVERFKRFFHLMLEEGVYLAPSAFEAGFMSVAHSMDDINNTIDAARRVFATL</sequence>
<reference key="1">
    <citation type="journal article" date="2011" name="J. Bacteriol.">
        <title>Comparative genomics of 28 Salmonella enterica isolates: evidence for CRISPR-mediated adaptive sublineage evolution.</title>
        <authorList>
            <person name="Fricke W.F."/>
            <person name="Mammel M.K."/>
            <person name="McDermott P.F."/>
            <person name="Tartera C."/>
            <person name="White D.G."/>
            <person name="Leclerc J.E."/>
            <person name="Ravel J."/>
            <person name="Cebula T.A."/>
        </authorList>
    </citation>
    <scope>NUCLEOTIDE SEQUENCE [LARGE SCALE GENOMIC DNA]</scope>
    <source>
        <strain>SL476</strain>
    </source>
</reference>
<proteinExistence type="inferred from homology"/>
<gene>
    <name evidence="1" type="primary">hemL</name>
    <name type="ordered locus">SeHA_C0239</name>
</gene>
<keyword id="KW-0963">Cytoplasm</keyword>
<keyword id="KW-0413">Isomerase</keyword>
<keyword id="KW-0627">Porphyrin biosynthesis</keyword>
<keyword id="KW-0663">Pyridoxal phosphate</keyword>
<accession>B4TK30</accession>
<comment type="catalytic activity">
    <reaction evidence="1">
        <text>(S)-4-amino-5-oxopentanoate = 5-aminolevulinate</text>
        <dbReference type="Rhea" id="RHEA:14265"/>
        <dbReference type="ChEBI" id="CHEBI:57501"/>
        <dbReference type="ChEBI" id="CHEBI:356416"/>
        <dbReference type="EC" id="5.4.3.8"/>
    </reaction>
</comment>
<comment type="cofactor">
    <cofactor evidence="1">
        <name>pyridoxal 5'-phosphate</name>
        <dbReference type="ChEBI" id="CHEBI:597326"/>
    </cofactor>
</comment>
<comment type="pathway">
    <text evidence="1">Porphyrin-containing compound metabolism; protoporphyrin-IX biosynthesis; 5-aminolevulinate from L-glutamyl-tRNA(Glu): step 2/2.</text>
</comment>
<comment type="subunit">
    <text evidence="1">Homodimer.</text>
</comment>
<comment type="subcellular location">
    <subcellularLocation>
        <location evidence="1">Cytoplasm</location>
    </subcellularLocation>
</comment>
<comment type="similarity">
    <text evidence="1">Belongs to the class-III pyridoxal-phosphate-dependent aminotransferase family. HemL subfamily.</text>
</comment>
<feature type="chain" id="PRO_1000121917" description="Glutamate-1-semialdehyde 2,1-aminomutase">
    <location>
        <begin position="1"/>
        <end position="426"/>
    </location>
</feature>
<feature type="modified residue" description="N6-(pyridoxal phosphate)lysine" evidence="1">
    <location>
        <position position="265"/>
    </location>
</feature>
<evidence type="ECO:0000255" key="1">
    <source>
        <dbReference type="HAMAP-Rule" id="MF_00375"/>
    </source>
</evidence>
<name>GSA_SALHS</name>
<organism>
    <name type="scientific">Salmonella heidelberg (strain SL476)</name>
    <dbReference type="NCBI Taxonomy" id="454169"/>
    <lineage>
        <taxon>Bacteria</taxon>
        <taxon>Pseudomonadati</taxon>
        <taxon>Pseudomonadota</taxon>
        <taxon>Gammaproteobacteria</taxon>
        <taxon>Enterobacterales</taxon>
        <taxon>Enterobacteriaceae</taxon>
        <taxon>Salmonella</taxon>
    </lineage>
</organism>
<dbReference type="EC" id="5.4.3.8" evidence="1"/>
<dbReference type="EMBL" id="CP001120">
    <property type="protein sequence ID" value="ACF67312.1"/>
    <property type="molecule type" value="Genomic_DNA"/>
</dbReference>
<dbReference type="RefSeq" id="WP_000045257.1">
    <property type="nucleotide sequence ID" value="NC_011083.1"/>
</dbReference>
<dbReference type="SMR" id="B4TK30"/>
<dbReference type="KEGG" id="seh:SeHA_C0239"/>
<dbReference type="HOGENOM" id="CLU_016922_1_5_6"/>
<dbReference type="UniPathway" id="UPA00251">
    <property type="reaction ID" value="UER00317"/>
</dbReference>
<dbReference type="Proteomes" id="UP000001866">
    <property type="component" value="Chromosome"/>
</dbReference>
<dbReference type="GO" id="GO:0005737">
    <property type="term" value="C:cytoplasm"/>
    <property type="evidence" value="ECO:0007669"/>
    <property type="project" value="UniProtKB-SubCell"/>
</dbReference>
<dbReference type="GO" id="GO:0042286">
    <property type="term" value="F:glutamate-1-semialdehyde 2,1-aminomutase activity"/>
    <property type="evidence" value="ECO:0007669"/>
    <property type="project" value="UniProtKB-UniRule"/>
</dbReference>
<dbReference type="GO" id="GO:0030170">
    <property type="term" value="F:pyridoxal phosphate binding"/>
    <property type="evidence" value="ECO:0007669"/>
    <property type="project" value="InterPro"/>
</dbReference>
<dbReference type="GO" id="GO:0008483">
    <property type="term" value="F:transaminase activity"/>
    <property type="evidence" value="ECO:0007669"/>
    <property type="project" value="InterPro"/>
</dbReference>
<dbReference type="GO" id="GO:0006782">
    <property type="term" value="P:protoporphyrinogen IX biosynthetic process"/>
    <property type="evidence" value="ECO:0007669"/>
    <property type="project" value="UniProtKB-UniRule"/>
</dbReference>
<dbReference type="CDD" id="cd00610">
    <property type="entry name" value="OAT_like"/>
    <property type="match status" value="1"/>
</dbReference>
<dbReference type="FunFam" id="3.40.640.10:FF:000021">
    <property type="entry name" value="Glutamate-1-semialdehyde 2,1-aminomutase"/>
    <property type="match status" value="1"/>
</dbReference>
<dbReference type="FunFam" id="3.90.1150.10:FF:000012">
    <property type="entry name" value="Glutamate-1-semialdehyde 2,1-aminomutase"/>
    <property type="match status" value="1"/>
</dbReference>
<dbReference type="Gene3D" id="3.90.1150.10">
    <property type="entry name" value="Aspartate Aminotransferase, domain 1"/>
    <property type="match status" value="1"/>
</dbReference>
<dbReference type="Gene3D" id="3.40.640.10">
    <property type="entry name" value="Type I PLP-dependent aspartate aminotransferase-like (Major domain)"/>
    <property type="match status" value="1"/>
</dbReference>
<dbReference type="HAMAP" id="MF_00375">
    <property type="entry name" value="HemL_aminotrans_3"/>
    <property type="match status" value="1"/>
</dbReference>
<dbReference type="InterPro" id="IPR004639">
    <property type="entry name" value="4pyrrol_synth_GluAld_NH2Trfase"/>
</dbReference>
<dbReference type="InterPro" id="IPR005814">
    <property type="entry name" value="Aminotrans_3"/>
</dbReference>
<dbReference type="InterPro" id="IPR049704">
    <property type="entry name" value="Aminotrans_3_PPA_site"/>
</dbReference>
<dbReference type="InterPro" id="IPR015424">
    <property type="entry name" value="PyrdxlP-dep_Trfase"/>
</dbReference>
<dbReference type="InterPro" id="IPR015421">
    <property type="entry name" value="PyrdxlP-dep_Trfase_major"/>
</dbReference>
<dbReference type="InterPro" id="IPR015422">
    <property type="entry name" value="PyrdxlP-dep_Trfase_small"/>
</dbReference>
<dbReference type="NCBIfam" id="TIGR00713">
    <property type="entry name" value="hemL"/>
    <property type="match status" value="1"/>
</dbReference>
<dbReference type="NCBIfam" id="NF000818">
    <property type="entry name" value="PRK00062.1"/>
    <property type="match status" value="1"/>
</dbReference>
<dbReference type="PANTHER" id="PTHR43713">
    <property type="entry name" value="GLUTAMATE-1-SEMIALDEHYDE 2,1-AMINOMUTASE"/>
    <property type="match status" value="1"/>
</dbReference>
<dbReference type="PANTHER" id="PTHR43713:SF3">
    <property type="entry name" value="GLUTAMATE-1-SEMIALDEHYDE 2,1-AMINOMUTASE 1, CHLOROPLASTIC-RELATED"/>
    <property type="match status" value="1"/>
</dbReference>
<dbReference type="Pfam" id="PF00202">
    <property type="entry name" value="Aminotran_3"/>
    <property type="match status" value="1"/>
</dbReference>
<dbReference type="SUPFAM" id="SSF53383">
    <property type="entry name" value="PLP-dependent transferases"/>
    <property type="match status" value="1"/>
</dbReference>
<dbReference type="PROSITE" id="PS00600">
    <property type="entry name" value="AA_TRANSFER_CLASS_3"/>
    <property type="match status" value="1"/>
</dbReference>